<feature type="signal peptide" evidence="1">
    <location>
        <begin position="1"/>
        <end position="22"/>
    </location>
</feature>
<feature type="chain" id="PRO_1000083580" description="Protein YceI">
    <location>
        <begin position="23"/>
        <end position="191"/>
    </location>
</feature>
<proteinExistence type="inferred from homology"/>
<gene>
    <name evidence="1" type="primary">yceI</name>
    <name type="ordered locus">SARI_01841</name>
</gene>
<reference key="1">
    <citation type="submission" date="2007-11" db="EMBL/GenBank/DDBJ databases">
        <authorList>
            <consortium name="The Salmonella enterica serovar Arizonae Genome Sequencing Project"/>
            <person name="McClelland M."/>
            <person name="Sanderson E.K."/>
            <person name="Porwollik S."/>
            <person name="Spieth J."/>
            <person name="Clifton W.S."/>
            <person name="Fulton R."/>
            <person name="Chunyan W."/>
            <person name="Wollam A."/>
            <person name="Shah N."/>
            <person name="Pepin K."/>
            <person name="Bhonagiri V."/>
            <person name="Nash W."/>
            <person name="Johnson M."/>
            <person name="Thiruvilangam P."/>
            <person name="Wilson R."/>
        </authorList>
    </citation>
    <scope>NUCLEOTIDE SEQUENCE [LARGE SCALE GENOMIC DNA]</scope>
    <source>
        <strain>ATCC BAA-731 / CDC346-86 / RSK2980</strain>
    </source>
</reference>
<evidence type="ECO:0000255" key="1">
    <source>
        <dbReference type="HAMAP-Rule" id="MF_00780"/>
    </source>
</evidence>
<dbReference type="EMBL" id="CP000880">
    <property type="protein sequence ID" value="ABX21726.1"/>
    <property type="molecule type" value="Genomic_DNA"/>
</dbReference>
<dbReference type="SMR" id="A9MH07"/>
<dbReference type="STRING" id="41514.SARI_01841"/>
<dbReference type="KEGG" id="ses:SARI_01841"/>
<dbReference type="HOGENOM" id="CLU_071003_1_2_6"/>
<dbReference type="Proteomes" id="UP000002084">
    <property type="component" value="Chromosome"/>
</dbReference>
<dbReference type="GO" id="GO:0042597">
    <property type="term" value="C:periplasmic space"/>
    <property type="evidence" value="ECO:0007669"/>
    <property type="project" value="UniProtKB-SubCell"/>
</dbReference>
<dbReference type="Gene3D" id="2.40.128.110">
    <property type="entry name" value="Lipid/polyisoprenoid-binding, YceI-like"/>
    <property type="match status" value="1"/>
</dbReference>
<dbReference type="HAMAP" id="MF_00780">
    <property type="entry name" value="UPF0312"/>
    <property type="match status" value="1"/>
</dbReference>
<dbReference type="InterPro" id="IPR007372">
    <property type="entry name" value="Lipid/polyisoprenoid-bd_YceI"/>
</dbReference>
<dbReference type="InterPro" id="IPR036761">
    <property type="entry name" value="TTHA0802/YceI-like_sf"/>
</dbReference>
<dbReference type="InterPro" id="IPR023480">
    <property type="entry name" value="UPF0312/YceI"/>
</dbReference>
<dbReference type="NCBIfam" id="NF002994">
    <property type="entry name" value="PRK03757.1"/>
    <property type="match status" value="1"/>
</dbReference>
<dbReference type="PANTHER" id="PTHR34406">
    <property type="entry name" value="PROTEIN YCEI"/>
    <property type="match status" value="1"/>
</dbReference>
<dbReference type="PANTHER" id="PTHR34406:SF1">
    <property type="entry name" value="PROTEIN YCEI"/>
    <property type="match status" value="1"/>
</dbReference>
<dbReference type="Pfam" id="PF04264">
    <property type="entry name" value="YceI"/>
    <property type="match status" value="1"/>
</dbReference>
<dbReference type="SMART" id="SM00867">
    <property type="entry name" value="YceI"/>
    <property type="match status" value="1"/>
</dbReference>
<dbReference type="SUPFAM" id="SSF101874">
    <property type="entry name" value="YceI-like"/>
    <property type="match status" value="1"/>
</dbReference>
<accession>A9MH07</accession>
<comment type="subcellular location">
    <subcellularLocation>
        <location evidence="1">Periplasm</location>
    </subcellularLocation>
</comment>
<comment type="similarity">
    <text evidence="1">Belongs to the UPF0312 family. Type 1 subfamily.</text>
</comment>
<sequence>MKKNLLGFTLASLLFTTGSAVAAEYKIDKEGQHAFVNFRIQHLGYSWLYGTFKDFDGTFTFDEKNPSADKVNVTINTNSVDTNHAERDKHLRSAEFLNVAKFPQATFTSTSVKKEGDELDITGNLTLNGVTKPVTLEAKLMGQGDDPWGGKRAGFEAEGKIKLKDFNITTDLGPASQEVELIISVEGVQQK</sequence>
<organism>
    <name type="scientific">Salmonella arizonae (strain ATCC BAA-731 / CDC346-86 / RSK2980)</name>
    <dbReference type="NCBI Taxonomy" id="41514"/>
    <lineage>
        <taxon>Bacteria</taxon>
        <taxon>Pseudomonadati</taxon>
        <taxon>Pseudomonadota</taxon>
        <taxon>Gammaproteobacteria</taxon>
        <taxon>Enterobacterales</taxon>
        <taxon>Enterobacteriaceae</taxon>
        <taxon>Salmonella</taxon>
    </lineage>
</organism>
<protein>
    <recommendedName>
        <fullName evidence="1">Protein YceI</fullName>
    </recommendedName>
</protein>
<keyword id="KW-0574">Periplasm</keyword>
<keyword id="KW-1185">Reference proteome</keyword>
<keyword id="KW-0732">Signal</keyword>
<name>YCEI_SALAR</name>